<dbReference type="EMBL" id="X58778">
    <property type="protein sequence ID" value="CAA41580.1"/>
    <property type="molecule type" value="Genomic_DNA"/>
</dbReference>
<dbReference type="PIR" id="S20454">
    <property type="entry name" value="S20454"/>
</dbReference>
<dbReference type="RefSeq" id="WP_004225004.1">
    <property type="nucleotide sequence ID" value="NZ_CP065401.1"/>
</dbReference>
<dbReference type="SMR" id="P27504"/>
<dbReference type="UniPathway" id="UPA00539"/>
<dbReference type="GO" id="GO:0018189">
    <property type="term" value="P:pyrroloquinoline quinone biosynthetic process"/>
    <property type="evidence" value="ECO:0007669"/>
    <property type="project" value="UniProtKB-UniRule"/>
</dbReference>
<dbReference type="CDD" id="cd16274">
    <property type="entry name" value="PQQB-like_MBL-fold"/>
    <property type="match status" value="1"/>
</dbReference>
<dbReference type="Gene3D" id="3.60.15.10">
    <property type="entry name" value="Ribonuclease Z/Hydroxyacylglutathione hydrolase-like"/>
    <property type="match status" value="1"/>
</dbReference>
<dbReference type="HAMAP" id="MF_00653">
    <property type="entry name" value="PQQ_syn_PqqB"/>
    <property type="match status" value="1"/>
</dbReference>
<dbReference type="InterPro" id="IPR001279">
    <property type="entry name" value="Metallo-B-lactamas"/>
</dbReference>
<dbReference type="InterPro" id="IPR011842">
    <property type="entry name" value="PQQ_synth_PqqB"/>
</dbReference>
<dbReference type="InterPro" id="IPR036866">
    <property type="entry name" value="RibonucZ/Hydroxyglut_hydro"/>
</dbReference>
<dbReference type="NCBIfam" id="TIGR02108">
    <property type="entry name" value="PQQ_syn_pqqB"/>
    <property type="match status" value="1"/>
</dbReference>
<dbReference type="PANTHER" id="PTHR42663:SF7">
    <property type="entry name" value="COENZYME PQQ SYNTHESIS PROTEIN B"/>
    <property type="match status" value="1"/>
</dbReference>
<dbReference type="PANTHER" id="PTHR42663">
    <property type="entry name" value="HYDROLASE C777.06C-RELATED-RELATED"/>
    <property type="match status" value="1"/>
</dbReference>
<dbReference type="Pfam" id="PF12706">
    <property type="entry name" value="Lactamase_B_2"/>
    <property type="match status" value="1"/>
</dbReference>
<dbReference type="SUPFAM" id="SSF56281">
    <property type="entry name" value="Metallo-hydrolase/oxidoreductase"/>
    <property type="match status" value="1"/>
</dbReference>
<comment type="function">
    <text evidence="1">May be involved in the transport of PQQ or its precursor to the periplasm.</text>
</comment>
<comment type="pathway">
    <text>Cofactor biosynthesis; pyrroloquinoline quinone biosynthesis.</text>
</comment>
<comment type="similarity">
    <text evidence="2">Belongs to the PqqB family.</text>
</comment>
<sequence length="308" mass="33464">MFIKVLGSAAGGGFPQWNCNCANCQGLRDGTIQAAPRTQSSIIVSDNGKEWVLCNASPDISQQIAHTPELNKAGVLRGTHIGGIILTDSQIDHTTGLLSLREGCPHQVWCTPEVHEDLSTGFPVFTMLRHWNGGLVHHPIAPQQPFTVDACPDLQFTAVPIASNAPPYSPYRDRPLPGHNVALFIENRRNGQTLFYAPGLGEPDETLLPWLQKADCLLIDGTVWQDDELQAAGVGRNTGRDMGHLALGDEHGMMALLASLPAKRKILIHINNTNPILNKQSPQRQALTQQGIEVSWDGMAITLQDTAC</sequence>
<reference key="1">
    <citation type="journal article" date="1992" name="Mol. Gen. Genet.">
        <title>Nucleotide sequence and structure of the Klebsiella pneumoniae pqq operon.</title>
        <authorList>
            <person name="Meulenberg J.J.M."/>
            <person name="Sellink E."/>
            <person name="Riegman N.H."/>
            <person name="Postma P.W."/>
        </authorList>
    </citation>
    <scope>NUCLEOTIDE SEQUENCE [GENOMIC DNA]</scope>
    <source>
        <strain>ATCC 15380 / DSM 2026 / NCTC 418 / NCIMB 418</strain>
    </source>
</reference>
<reference key="2">
    <citation type="journal article" date="1995" name="J. Bacteriol.">
        <title>Synthesis of pyrroloquinoline quinone in vivo and in vitro and detection of an intermediate in the biosynthetic pathway.</title>
        <authorList>
            <person name="Velterop J.S."/>
            <person name="Sellink E."/>
            <person name="Meulenberg J.J."/>
            <person name="David S."/>
            <person name="Bulder I."/>
            <person name="Postma P.W."/>
        </authorList>
    </citation>
    <scope>FUNCTION</scope>
    <source>
        <strain>ATCC 15380 / DSM 2026 / NCTC 418 / NCIMB 418</strain>
    </source>
</reference>
<evidence type="ECO:0000269" key="1">
    <source>
    </source>
</evidence>
<evidence type="ECO:0000305" key="2"/>
<organism>
    <name type="scientific">Klebsiella pneumoniae</name>
    <dbReference type="NCBI Taxonomy" id="573"/>
    <lineage>
        <taxon>Bacteria</taxon>
        <taxon>Pseudomonadati</taxon>
        <taxon>Pseudomonadota</taxon>
        <taxon>Gammaproteobacteria</taxon>
        <taxon>Enterobacterales</taxon>
        <taxon>Enterobacteriaceae</taxon>
        <taxon>Klebsiella/Raoultella group</taxon>
        <taxon>Klebsiella</taxon>
        <taxon>Klebsiella pneumoniae complex</taxon>
    </lineage>
</organism>
<protein>
    <recommendedName>
        <fullName>Coenzyme PQQ synthesis protein B</fullName>
    </recommendedName>
    <alternativeName>
        <fullName>Pyrroloquinoline quinone biosynthesis protein B</fullName>
    </alternativeName>
</protein>
<name>PQQB_KLEPN</name>
<gene>
    <name type="primary">pqqB</name>
</gene>
<feature type="chain" id="PRO_0000219999" description="Coenzyme PQQ synthesis protein B">
    <location>
        <begin position="1"/>
        <end position="308"/>
    </location>
</feature>
<proteinExistence type="inferred from homology"/>
<keyword id="KW-0884">PQQ biosynthesis</keyword>
<keyword id="KW-0813">Transport</keyword>
<accession>P27504</accession>